<comment type="function">
    <text evidence="1">Produces ATP from ADP in the presence of a proton gradient across the membrane. The catalytic sites are hosted primarily by the beta subunits.</text>
</comment>
<comment type="catalytic activity">
    <reaction evidence="1">
        <text>ATP + H2O + 4 H(+)(in) = ADP + phosphate + 5 H(+)(out)</text>
        <dbReference type="Rhea" id="RHEA:57720"/>
        <dbReference type="ChEBI" id="CHEBI:15377"/>
        <dbReference type="ChEBI" id="CHEBI:15378"/>
        <dbReference type="ChEBI" id="CHEBI:30616"/>
        <dbReference type="ChEBI" id="CHEBI:43474"/>
        <dbReference type="ChEBI" id="CHEBI:456216"/>
        <dbReference type="EC" id="7.1.2.2"/>
    </reaction>
</comment>
<comment type="subunit">
    <text evidence="1">F-type ATPases have 2 components, CF(1) - the catalytic core - and CF(0) - the membrane proton channel. CF(1) has five subunits: alpha(3), beta(3), gamma(1), delta(1), epsilon(1). CF(0) has four main subunits: a(1), b(1), b'(1) and c(9-12).</text>
</comment>
<comment type="subcellular location">
    <subcellularLocation>
        <location evidence="1">Plastid</location>
        <location evidence="1">Chloroplast thylakoid membrane</location>
        <topology evidence="1">Peripheral membrane protein</topology>
    </subcellularLocation>
</comment>
<comment type="similarity">
    <text evidence="1">Belongs to the ATPase alpha/beta chains family.</text>
</comment>
<dbReference type="EC" id="7.1.2.2" evidence="1"/>
<dbReference type="EMBL" id="AP008956">
    <property type="protein sequence ID" value="BAE97212.1"/>
    <property type="molecule type" value="Genomic_DNA"/>
</dbReference>
<dbReference type="RefSeq" id="YP_665565.1">
    <property type="nucleotide sequence ID" value="NC_008235.1"/>
</dbReference>
<dbReference type="SMR" id="Q14FF0"/>
<dbReference type="GeneID" id="4178219"/>
<dbReference type="KEGG" id="palz:4178219"/>
<dbReference type="OrthoDB" id="8277at3646"/>
<dbReference type="GO" id="GO:0009535">
    <property type="term" value="C:chloroplast thylakoid membrane"/>
    <property type="evidence" value="ECO:0007669"/>
    <property type="project" value="UniProtKB-SubCell"/>
</dbReference>
<dbReference type="GO" id="GO:0005739">
    <property type="term" value="C:mitochondrion"/>
    <property type="evidence" value="ECO:0007669"/>
    <property type="project" value="GOC"/>
</dbReference>
<dbReference type="GO" id="GO:0045259">
    <property type="term" value="C:proton-transporting ATP synthase complex"/>
    <property type="evidence" value="ECO:0007669"/>
    <property type="project" value="UniProtKB-KW"/>
</dbReference>
<dbReference type="GO" id="GO:0005524">
    <property type="term" value="F:ATP binding"/>
    <property type="evidence" value="ECO:0007669"/>
    <property type="project" value="UniProtKB-UniRule"/>
</dbReference>
<dbReference type="GO" id="GO:0016887">
    <property type="term" value="F:ATP hydrolysis activity"/>
    <property type="evidence" value="ECO:0007669"/>
    <property type="project" value="InterPro"/>
</dbReference>
<dbReference type="GO" id="GO:0046933">
    <property type="term" value="F:proton-transporting ATP synthase activity, rotational mechanism"/>
    <property type="evidence" value="ECO:0007669"/>
    <property type="project" value="UniProtKB-UniRule"/>
</dbReference>
<dbReference type="GO" id="GO:0042776">
    <property type="term" value="P:proton motive force-driven mitochondrial ATP synthesis"/>
    <property type="evidence" value="ECO:0007669"/>
    <property type="project" value="TreeGrafter"/>
</dbReference>
<dbReference type="CDD" id="cd18110">
    <property type="entry name" value="ATP-synt_F1_beta_C"/>
    <property type="match status" value="1"/>
</dbReference>
<dbReference type="CDD" id="cd18115">
    <property type="entry name" value="ATP-synt_F1_beta_N"/>
    <property type="match status" value="1"/>
</dbReference>
<dbReference type="CDD" id="cd01133">
    <property type="entry name" value="F1-ATPase_beta_CD"/>
    <property type="match status" value="1"/>
</dbReference>
<dbReference type="FunFam" id="1.10.1140.10:FF:000001">
    <property type="entry name" value="ATP synthase subunit beta"/>
    <property type="match status" value="1"/>
</dbReference>
<dbReference type="FunFam" id="3.40.50.12240:FF:000006">
    <property type="entry name" value="ATP synthase subunit beta"/>
    <property type="match status" value="1"/>
</dbReference>
<dbReference type="FunFam" id="3.40.50.300:FF:000026">
    <property type="entry name" value="ATP synthase subunit beta"/>
    <property type="match status" value="1"/>
</dbReference>
<dbReference type="FunFam" id="2.40.10.170:FF:000002">
    <property type="entry name" value="ATP synthase subunit beta, chloroplastic"/>
    <property type="match status" value="1"/>
</dbReference>
<dbReference type="Gene3D" id="2.40.10.170">
    <property type="match status" value="1"/>
</dbReference>
<dbReference type="Gene3D" id="1.10.1140.10">
    <property type="entry name" value="Bovine Mitochondrial F1-atpase, Atp Synthase Beta Chain, Chain D, domain 3"/>
    <property type="match status" value="1"/>
</dbReference>
<dbReference type="Gene3D" id="3.40.50.300">
    <property type="entry name" value="P-loop containing nucleotide triphosphate hydrolases"/>
    <property type="match status" value="1"/>
</dbReference>
<dbReference type="HAMAP" id="MF_01347">
    <property type="entry name" value="ATP_synth_beta_bact"/>
    <property type="match status" value="1"/>
</dbReference>
<dbReference type="InterPro" id="IPR003593">
    <property type="entry name" value="AAA+_ATPase"/>
</dbReference>
<dbReference type="InterPro" id="IPR055190">
    <property type="entry name" value="ATP-synt_VA_C"/>
</dbReference>
<dbReference type="InterPro" id="IPR005722">
    <property type="entry name" value="ATP_synth_F1_bsu"/>
</dbReference>
<dbReference type="InterPro" id="IPR020003">
    <property type="entry name" value="ATPase_a/bsu_AS"/>
</dbReference>
<dbReference type="InterPro" id="IPR050053">
    <property type="entry name" value="ATPase_alpha/beta_chains"/>
</dbReference>
<dbReference type="InterPro" id="IPR004100">
    <property type="entry name" value="ATPase_F1/V1/A1_a/bsu_N"/>
</dbReference>
<dbReference type="InterPro" id="IPR036121">
    <property type="entry name" value="ATPase_F1/V1/A1_a/bsu_N_sf"/>
</dbReference>
<dbReference type="InterPro" id="IPR000194">
    <property type="entry name" value="ATPase_F1/V1/A1_a/bsu_nucl-bd"/>
</dbReference>
<dbReference type="InterPro" id="IPR024034">
    <property type="entry name" value="ATPase_F1/V1_b/a_C"/>
</dbReference>
<dbReference type="InterPro" id="IPR027417">
    <property type="entry name" value="P-loop_NTPase"/>
</dbReference>
<dbReference type="NCBIfam" id="TIGR01039">
    <property type="entry name" value="atpD"/>
    <property type="match status" value="1"/>
</dbReference>
<dbReference type="PANTHER" id="PTHR15184">
    <property type="entry name" value="ATP SYNTHASE"/>
    <property type="match status" value="1"/>
</dbReference>
<dbReference type="PANTHER" id="PTHR15184:SF71">
    <property type="entry name" value="ATP SYNTHASE SUBUNIT BETA, MITOCHONDRIAL"/>
    <property type="match status" value="1"/>
</dbReference>
<dbReference type="Pfam" id="PF00006">
    <property type="entry name" value="ATP-synt_ab"/>
    <property type="match status" value="1"/>
</dbReference>
<dbReference type="Pfam" id="PF02874">
    <property type="entry name" value="ATP-synt_ab_N"/>
    <property type="match status" value="1"/>
</dbReference>
<dbReference type="Pfam" id="PF22919">
    <property type="entry name" value="ATP-synt_VA_C"/>
    <property type="match status" value="1"/>
</dbReference>
<dbReference type="SMART" id="SM00382">
    <property type="entry name" value="AAA"/>
    <property type="match status" value="1"/>
</dbReference>
<dbReference type="SUPFAM" id="SSF47917">
    <property type="entry name" value="C-terminal domain of alpha and beta subunits of F1 ATP synthase"/>
    <property type="match status" value="1"/>
</dbReference>
<dbReference type="SUPFAM" id="SSF50615">
    <property type="entry name" value="N-terminal domain of alpha and beta subunits of F1 ATP synthase"/>
    <property type="match status" value="1"/>
</dbReference>
<dbReference type="SUPFAM" id="SSF52540">
    <property type="entry name" value="P-loop containing nucleoside triphosphate hydrolases"/>
    <property type="match status" value="1"/>
</dbReference>
<dbReference type="PROSITE" id="PS00152">
    <property type="entry name" value="ATPASE_ALPHA_BETA"/>
    <property type="match status" value="1"/>
</dbReference>
<sequence length="498" mass="53623">MRINPTTSGPGVSALEKKNLGHIAQIIGPVLDVVFPPGKMPNIYNALVVKGRDTVSQQINVTCEVQQLLGNNRVRAVAMSATDGLMRGMEVIDTGAPLSVPVGGATLGRIFNVLGEPVDDLGPVDTGTTSPIHRSAPAFIQLDTKLSIFETGIKVVDLLAPYRRGGKIGLFGGAGVGKTVLIMELINNIAKAHGGVSVFGGVGERTREGNDLYMEMKESGVINEENIAESKVALVYGQMNEPPGARMRVGLTALTMAEYFRDVNEQDVLLFIDNIFRFVQAGSEVSALLGRMPSAVGYQPTLSTEMGTLQERITSTKEGSITSIQAVYVPADDLTDPAPATTFAHLDATTVLSRGLAAKGIYPAVDPLDSTSTMLQPQIVGEEHYETAQRVKQTLQRYKELQDIIAILGLDELSEEDRLTVARARKIERFLSQPFFVAEVFTGSPGKYVGLAETIRGFKLILSGELDSLPEQAFYLVGNIDEATAKATNLEMENNLKK</sequence>
<keyword id="KW-0066">ATP synthesis</keyword>
<keyword id="KW-0067">ATP-binding</keyword>
<keyword id="KW-0139">CF(1)</keyword>
<keyword id="KW-0150">Chloroplast</keyword>
<keyword id="KW-0375">Hydrogen ion transport</keyword>
<keyword id="KW-0406">Ion transport</keyword>
<keyword id="KW-0472">Membrane</keyword>
<keyword id="KW-0547">Nucleotide-binding</keyword>
<keyword id="KW-0934">Plastid</keyword>
<keyword id="KW-0793">Thylakoid</keyword>
<keyword id="KW-1278">Translocase</keyword>
<keyword id="KW-0813">Transport</keyword>
<proteinExistence type="inferred from homology"/>
<accession>Q14FF0</accession>
<geneLocation type="chloroplast"/>
<organism>
    <name type="scientific">Populus alba</name>
    <name type="common">White poplar</name>
    <dbReference type="NCBI Taxonomy" id="43335"/>
    <lineage>
        <taxon>Eukaryota</taxon>
        <taxon>Viridiplantae</taxon>
        <taxon>Streptophyta</taxon>
        <taxon>Embryophyta</taxon>
        <taxon>Tracheophyta</taxon>
        <taxon>Spermatophyta</taxon>
        <taxon>Magnoliopsida</taxon>
        <taxon>eudicotyledons</taxon>
        <taxon>Gunneridae</taxon>
        <taxon>Pentapetalae</taxon>
        <taxon>rosids</taxon>
        <taxon>fabids</taxon>
        <taxon>Malpighiales</taxon>
        <taxon>Salicaceae</taxon>
        <taxon>Saliceae</taxon>
        <taxon>Populus</taxon>
    </lineage>
</organism>
<feature type="chain" id="PRO_0000254513" description="ATP synthase subunit beta, chloroplastic">
    <location>
        <begin position="1"/>
        <end position="498"/>
    </location>
</feature>
<feature type="binding site" evidence="1">
    <location>
        <begin position="172"/>
        <end position="179"/>
    </location>
    <ligand>
        <name>ATP</name>
        <dbReference type="ChEBI" id="CHEBI:30616"/>
    </ligand>
</feature>
<reference key="1">
    <citation type="submission" date="2005-03" db="EMBL/GenBank/DDBJ databases">
        <title>Complete structure of the chloroplast genome of Populus alba.</title>
        <authorList>
            <person name="Okumura S."/>
            <person name="Yamashita A."/>
            <person name="Kanamoto H."/>
            <person name="Hattori M."/>
            <person name="Takase H."/>
            <person name="Tomizawa K."/>
        </authorList>
    </citation>
    <scope>NUCLEOTIDE SEQUENCE [LARGE SCALE GENOMIC DNA]</scope>
</reference>
<protein>
    <recommendedName>
        <fullName evidence="1">ATP synthase subunit beta, chloroplastic</fullName>
        <ecNumber evidence="1">7.1.2.2</ecNumber>
    </recommendedName>
    <alternativeName>
        <fullName evidence="1">ATP synthase F1 sector subunit beta</fullName>
    </alternativeName>
    <alternativeName>
        <fullName evidence="1">F-ATPase subunit beta</fullName>
    </alternativeName>
</protein>
<evidence type="ECO:0000255" key="1">
    <source>
        <dbReference type="HAMAP-Rule" id="MF_01347"/>
    </source>
</evidence>
<gene>
    <name evidence="1" type="primary">atpB</name>
</gene>
<name>ATPB_POPAL</name>